<feature type="chain" id="PRO_1000127940" description="Small ribosomal subunit protein uS19">
    <location>
        <begin position="1"/>
        <end position="91"/>
    </location>
</feature>
<keyword id="KW-0687">Ribonucleoprotein</keyword>
<keyword id="KW-0689">Ribosomal protein</keyword>
<keyword id="KW-0694">RNA-binding</keyword>
<keyword id="KW-0699">rRNA-binding</keyword>
<proteinExistence type="inferred from homology"/>
<comment type="function">
    <text evidence="1">Protein S19 forms a complex with S13 that binds strongly to the 16S ribosomal RNA.</text>
</comment>
<comment type="similarity">
    <text evidence="1">Belongs to the universal ribosomal protein uS19 family.</text>
</comment>
<organism>
    <name type="scientific">Burkholderia cenocepacia (strain ATCC BAA-245 / DSM 16553 / LMG 16656 / NCTC 13227 / J2315 / CF5610)</name>
    <name type="common">Burkholderia cepacia (strain J2315)</name>
    <dbReference type="NCBI Taxonomy" id="216591"/>
    <lineage>
        <taxon>Bacteria</taxon>
        <taxon>Pseudomonadati</taxon>
        <taxon>Pseudomonadota</taxon>
        <taxon>Betaproteobacteria</taxon>
        <taxon>Burkholderiales</taxon>
        <taxon>Burkholderiaceae</taxon>
        <taxon>Burkholderia</taxon>
        <taxon>Burkholderia cepacia complex</taxon>
    </lineage>
</organism>
<accession>B4E5C4</accession>
<gene>
    <name evidence="1" type="primary">rpsS</name>
    <name type="ordered locus">BceJ2315_02410</name>
    <name type="ORF">BCAL0238</name>
</gene>
<dbReference type="EMBL" id="AM747720">
    <property type="protein sequence ID" value="CAR50549.1"/>
    <property type="molecule type" value="Genomic_DNA"/>
</dbReference>
<dbReference type="RefSeq" id="WP_004199273.1">
    <property type="nucleotide sequence ID" value="NC_011000.1"/>
</dbReference>
<dbReference type="SMR" id="B4E5C4"/>
<dbReference type="GeneID" id="98107156"/>
<dbReference type="KEGG" id="bcj:BCAL0238"/>
<dbReference type="eggNOG" id="COG0185">
    <property type="taxonomic scope" value="Bacteria"/>
</dbReference>
<dbReference type="HOGENOM" id="CLU_144911_0_1_4"/>
<dbReference type="BioCyc" id="BCEN216591:G1G1V-281-MONOMER"/>
<dbReference type="Proteomes" id="UP000001035">
    <property type="component" value="Chromosome 1"/>
</dbReference>
<dbReference type="GO" id="GO:0005737">
    <property type="term" value="C:cytoplasm"/>
    <property type="evidence" value="ECO:0007669"/>
    <property type="project" value="UniProtKB-ARBA"/>
</dbReference>
<dbReference type="GO" id="GO:0015935">
    <property type="term" value="C:small ribosomal subunit"/>
    <property type="evidence" value="ECO:0007669"/>
    <property type="project" value="InterPro"/>
</dbReference>
<dbReference type="GO" id="GO:0019843">
    <property type="term" value="F:rRNA binding"/>
    <property type="evidence" value="ECO:0007669"/>
    <property type="project" value="UniProtKB-UniRule"/>
</dbReference>
<dbReference type="GO" id="GO:0003735">
    <property type="term" value="F:structural constituent of ribosome"/>
    <property type="evidence" value="ECO:0007669"/>
    <property type="project" value="InterPro"/>
</dbReference>
<dbReference type="GO" id="GO:0000028">
    <property type="term" value="P:ribosomal small subunit assembly"/>
    <property type="evidence" value="ECO:0007669"/>
    <property type="project" value="TreeGrafter"/>
</dbReference>
<dbReference type="GO" id="GO:0006412">
    <property type="term" value="P:translation"/>
    <property type="evidence" value="ECO:0007669"/>
    <property type="project" value="UniProtKB-UniRule"/>
</dbReference>
<dbReference type="FunFam" id="3.30.860.10:FF:000001">
    <property type="entry name" value="30S ribosomal protein S19"/>
    <property type="match status" value="1"/>
</dbReference>
<dbReference type="Gene3D" id="3.30.860.10">
    <property type="entry name" value="30s Ribosomal Protein S19, Chain A"/>
    <property type="match status" value="1"/>
</dbReference>
<dbReference type="HAMAP" id="MF_00531">
    <property type="entry name" value="Ribosomal_uS19"/>
    <property type="match status" value="1"/>
</dbReference>
<dbReference type="InterPro" id="IPR002222">
    <property type="entry name" value="Ribosomal_uS19"/>
</dbReference>
<dbReference type="InterPro" id="IPR005732">
    <property type="entry name" value="Ribosomal_uS19_bac-type"/>
</dbReference>
<dbReference type="InterPro" id="IPR020934">
    <property type="entry name" value="Ribosomal_uS19_CS"/>
</dbReference>
<dbReference type="InterPro" id="IPR023575">
    <property type="entry name" value="Ribosomal_uS19_SF"/>
</dbReference>
<dbReference type="NCBIfam" id="TIGR01050">
    <property type="entry name" value="rpsS_bact"/>
    <property type="match status" value="1"/>
</dbReference>
<dbReference type="PANTHER" id="PTHR11880">
    <property type="entry name" value="RIBOSOMAL PROTEIN S19P FAMILY MEMBER"/>
    <property type="match status" value="1"/>
</dbReference>
<dbReference type="PANTHER" id="PTHR11880:SF8">
    <property type="entry name" value="SMALL RIBOSOMAL SUBUNIT PROTEIN US19M"/>
    <property type="match status" value="1"/>
</dbReference>
<dbReference type="Pfam" id="PF00203">
    <property type="entry name" value="Ribosomal_S19"/>
    <property type="match status" value="1"/>
</dbReference>
<dbReference type="PIRSF" id="PIRSF002144">
    <property type="entry name" value="Ribosomal_S19"/>
    <property type="match status" value="1"/>
</dbReference>
<dbReference type="PRINTS" id="PR00975">
    <property type="entry name" value="RIBOSOMALS19"/>
</dbReference>
<dbReference type="SUPFAM" id="SSF54570">
    <property type="entry name" value="Ribosomal protein S19"/>
    <property type="match status" value="1"/>
</dbReference>
<dbReference type="PROSITE" id="PS00323">
    <property type="entry name" value="RIBOSOMAL_S19"/>
    <property type="match status" value="1"/>
</dbReference>
<reference key="1">
    <citation type="journal article" date="2009" name="J. Bacteriol.">
        <title>The genome of Burkholderia cenocepacia J2315, an epidemic pathogen of cystic fibrosis patients.</title>
        <authorList>
            <person name="Holden M.T."/>
            <person name="Seth-Smith H.M."/>
            <person name="Crossman L.C."/>
            <person name="Sebaihia M."/>
            <person name="Bentley S.D."/>
            <person name="Cerdeno-Tarraga A.M."/>
            <person name="Thomson N.R."/>
            <person name="Bason N."/>
            <person name="Quail M.A."/>
            <person name="Sharp S."/>
            <person name="Cherevach I."/>
            <person name="Churcher C."/>
            <person name="Goodhead I."/>
            <person name="Hauser H."/>
            <person name="Holroyd N."/>
            <person name="Mungall K."/>
            <person name="Scott P."/>
            <person name="Walker D."/>
            <person name="White B."/>
            <person name="Rose H."/>
            <person name="Iversen P."/>
            <person name="Mil-Homens D."/>
            <person name="Rocha E.P."/>
            <person name="Fialho A.M."/>
            <person name="Baldwin A."/>
            <person name="Dowson C."/>
            <person name="Barrell B.G."/>
            <person name="Govan J.R."/>
            <person name="Vandamme P."/>
            <person name="Hart C.A."/>
            <person name="Mahenthiralingam E."/>
            <person name="Parkhill J."/>
        </authorList>
    </citation>
    <scope>NUCLEOTIDE SEQUENCE [LARGE SCALE GENOMIC DNA]</scope>
    <source>
        <strain>ATCC BAA-245 / DSM 16553 / LMG 16656 / NCTC 13227 / J2315 / CF5610</strain>
    </source>
</reference>
<name>RS19_BURCJ</name>
<evidence type="ECO:0000255" key="1">
    <source>
        <dbReference type="HAMAP-Rule" id="MF_00531"/>
    </source>
</evidence>
<evidence type="ECO:0000305" key="2"/>
<sequence length="91" mass="10108">MARSVKKGPFCDAHLLKKVEAAAASRDKKPIKTWSRRSTILPDFIGLTIAVHNGRQHVPVYISENMVGHKLGEFALTRTFKGHAADKKAKK</sequence>
<protein>
    <recommendedName>
        <fullName evidence="1">Small ribosomal subunit protein uS19</fullName>
    </recommendedName>
    <alternativeName>
        <fullName evidence="2">30S ribosomal protein S19</fullName>
    </alternativeName>
</protein>